<proteinExistence type="inferred from homology"/>
<accession>Q44773</accession>
<accession>Q44943</accession>
<accession>Q57234</accession>
<evidence type="ECO:0000250" key="1">
    <source>
        <dbReference type="UniProtKB" id="Q8DPI7"/>
    </source>
</evidence>
<evidence type="ECO:0000305" key="2"/>
<dbReference type="EMBL" id="U43739">
    <property type="protein sequence ID" value="AAA85620.1"/>
    <property type="status" value="ALT_INIT"/>
    <property type="molecule type" value="Genomic_DNA"/>
</dbReference>
<dbReference type="EMBL" id="L40505">
    <property type="protein sequence ID" value="AAB04623.1"/>
    <property type="status" value="ALT_INIT"/>
    <property type="molecule type" value="Genomic_DNA"/>
</dbReference>
<dbReference type="EMBL" id="X96685">
    <property type="protein sequence ID" value="CAA65466.1"/>
    <property type="status" value="ALT_INIT"/>
    <property type="molecule type" value="Genomic_DNA"/>
</dbReference>
<dbReference type="EMBL" id="L76303">
    <property type="protein sequence ID" value="AAB51404.1"/>
    <property type="status" value="ALT_INIT"/>
    <property type="molecule type" value="Genomic_DNA"/>
</dbReference>
<dbReference type="EMBL" id="AE000783">
    <property type="protein sequence ID" value="AAC66651.2"/>
    <property type="molecule type" value="Genomic_DNA"/>
</dbReference>
<dbReference type="PIR" id="A70137">
    <property type="entry name" value="A70137"/>
</dbReference>
<dbReference type="RefSeq" id="NP_212431.2">
    <property type="nucleotide sequence ID" value="NC_001318.1"/>
</dbReference>
<dbReference type="RefSeq" id="WP_010254014.1">
    <property type="nucleotide sequence ID" value="NC_001318.1"/>
</dbReference>
<dbReference type="SMR" id="Q44773"/>
<dbReference type="STRING" id="224326.BB_0297"/>
<dbReference type="PaxDb" id="224326-BB_0297"/>
<dbReference type="EnsemblBacteria" id="AAC66651">
    <property type="protein sequence ID" value="AAC66651"/>
    <property type="gene ID" value="BB_0297"/>
</dbReference>
<dbReference type="KEGG" id="bbu:BB_0297"/>
<dbReference type="PATRIC" id="fig|224326.49.peg.696"/>
<dbReference type="HOGENOM" id="CLU_029601_3_1_12"/>
<dbReference type="OrthoDB" id="9785707at2"/>
<dbReference type="Proteomes" id="UP000001807">
    <property type="component" value="Chromosome"/>
</dbReference>
<dbReference type="GO" id="GO:0009294">
    <property type="term" value="P:DNA-mediated transformation"/>
    <property type="evidence" value="ECO:0007669"/>
    <property type="project" value="InterPro"/>
</dbReference>
<dbReference type="Gene3D" id="3.40.50.450">
    <property type="match status" value="1"/>
</dbReference>
<dbReference type="InterPro" id="IPR003488">
    <property type="entry name" value="DprA"/>
</dbReference>
<dbReference type="NCBIfam" id="TIGR00732">
    <property type="entry name" value="dprA"/>
    <property type="match status" value="1"/>
</dbReference>
<dbReference type="PANTHER" id="PTHR43022">
    <property type="entry name" value="PROTEIN SMF"/>
    <property type="match status" value="1"/>
</dbReference>
<dbReference type="PANTHER" id="PTHR43022:SF1">
    <property type="entry name" value="PROTEIN SMF"/>
    <property type="match status" value="1"/>
</dbReference>
<dbReference type="Pfam" id="PF02481">
    <property type="entry name" value="DNA_processg_A"/>
    <property type="match status" value="1"/>
</dbReference>
<dbReference type="SUPFAM" id="SSF102405">
    <property type="entry name" value="MCP/YpsA-like"/>
    <property type="match status" value="1"/>
</dbReference>
<keyword id="KW-1185">Reference proteome</keyword>
<sequence>MKLLYIDNLKFLKGKEKLKLFNNFDFNNVIKLTQKDIESYFLKSFRRLFKLPDLKLVELQEKVIQRTKAKVAILGSKSYPNKLKRIYDPPFAIYYKGNLPDCSLLSWAVVGSRKISKTLAERTREFSSHLAKNGVEIISGFAIGADIEAHIAAINENKRTFAVIPTDIDNIYPRQNRKYVSKLLEQGGGIITETLPFDKIQNYFFAKRNRLVSGLSDAIFITYAPLKSGALITAELGLDLGLDVYVYDLDFCGDGAVKLHDFGAQEIKTVKDLYALLNIKYVDSNNIEDDSKECCNCKNVSDVLIGELLKEVCK</sequence>
<gene>
    <name type="primary">smf</name>
    <name type="ordered locus">BB_0297</name>
</gene>
<name>SMF_BORBU</name>
<comment type="function">
    <text evidence="1">May help load RecA onto ssDNA (By similarity).</text>
</comment>
<comment type="similarity">
    <text evidence="2">Belongs to the DprA/Smf family.</text>
</comment>
<comment type="sequence caution" evidence="2">
    <conflict type="erroneous initiation">
        <sequence resource="EMBL-CDS" id="AAA85620"/>
    </conflict>
    <text>Extended N-terminus.</text>
</comment>
<comment type="sequence caution" evidence="2">
    <conflict type="erroneous initiation">
        <sequence resource="EMBL-CDS" id="AAB04623"/>
    </conflict>
    <text>Extended N-terminus.</text>
</comment>
<comment type="sequence caution" evidence="2">
    <conflict type="erroneous initiation">
        <sequence resource="EMBL-CDS" id="AAB51404"/>
    </conflict>
    <text>Extended N-terminus.</text>
</comment>
<comment type="sequence caution" evidence="2">
    <conflict type="erroneous initiation">
        <sequence resource="EMBL-CDS" id="CAA65466"/>
    </conflict>
    <text>Extended N-terminus.</text>
</comment>
<feature type="chain" id="PRO_0000209156" description="Protein Smf">
    <location>
        <begin position="1"/>
        <end position="314"/>
    </location>
</feature>
<feature type="sequence conflict" description="In Ref. 2; AAB04623." evidence="2" ref="2">
    <original>ETLPFDKIQNYFFAKRNRLVSGL</original>
    <variation>DVLCHLIKFKIIFLPKEIDWYQVW</variation>
    <location>
        <begin position="193"/>
        <end position="215"/>
    </location>
</feature>
<feature type="sequence conflict" description="In Ref. 3; CAA65466/AAB51404." evidence="2" ref="3">
    <original>GL</original>
    <variation>VW</variation>
    <location>
        <begin position="214"/>
        <end position="215"/>
    </location>
</feature>
<feature type="sequence conflict" description="In Ref. 2; AAB04623 and 3; CAA65466/AAB51404." evidence="2" ref="2 3">
    <location>
        <position position="233"/>
    </location>
</feature>
<feature type="sequence conflict" description="In Ref. 2; AAB04623." evidence="2" ref="2">
    <original>LH</original>
    <variation>FD</variation>
    <location>
        <begin position="259"/>
        <end position="260"/>
    </location>
</feature>
<feature type="sequence conflict" description="In Ref. 2; AAB04623 and 3; CAA65466/AAB51404." evidence="2" ref="2 3">
    <original>E</original>
    <variation>K</variation>
    <location>
        <position position="288"/>
    </location>
</feature>
<feature type="sequence conflict" description="In Ref. 2; AAB04623 and 3; CAA65466/AAB51404." evidence="2" ref="2 3">
    <original>N</original>
    <variation>D</variation>
    <location>
        <position position="296"/>
    </location>
</feature>
<feature type="sequence conflict" description="In Ref. 2; AAB04623 and 3; CAA65466/AAB51404." evidence="2" ref="2 3">
    <original>C</original>
    <variation>Y</variation>
    <location>
        <position position="313"/>
    </location>
</feature>
<protein>
    <recommendedName>
        <fullName>Protein Smf</fullName>
    </recommendedName>
</protein>
<organism>
    <name type="scientific">Borreliella burgdorferi (strain ATCC 35210 / DSM 4680 / CIP 102532 / B31)</name>
    <name type="common">Borrelia burgdorferi</name>
    <dbReference type="NCBI Taxonomy" id="224326"/>
    <lineage>
        <taxon>Bacteria</taxon>
        <taxon>Pseudomonadati</taxon>
        <taxon>Spirochaetota</taxon>
        <taxon>Spirochaetia</taxon>
        <taxon>Spirochaetales</taxon>
        <taxon>Borreliaceae</taxon>
        <taxon>Borreliella</taxon>
    </lineage>
</organism>
<reference key="1">
    <citation type="submission" date="1995-12" db="EMBL/GenBank/DDBJ databases">
        <authorList>
            <person name="Dunn J.J."/>
            <person name="Butler-Loffredo L."/>
            <person name="Kieleczawa J."/>
            <person name="Medalle J."/>
            <person name="Luft B.J."/>
        </authorList>
    </citation>
    <scope>NUCLEOTIDE SEQUENCE [GENOMIC DNA]</scope>
    <source>
        <strain>ATCC 35210 / DSM 4680 / CIP 102532 / B31</strain>
    </source>
</reference>
<reference key="2">
    <citation type="submission" date="1996-07" db="EMBL/GenBank/DDBJ databases">
        <authorList>
            <person name="Ge Y."/>
            <person name="Saint-Girons I."/>
            <person name="Old I.G."/>
            <person name="Yelton D.B."/>
            <person name="Charon N.W."/>
        </authorList>
    </citation>
    <scope>NUCLEOTIDE SEQUENCE [GENOMIC DNA]</scope>
    <source>
        <strain>212</strain>
    </source>
</reference>
<reference key="3">
    <citation type="submission" date="1996-03" db="EMBL/GenBank/DDBJ databases">
        <authorList>
            <person name="Ge Y."/>
            <person name="Old I.G."/>
            <person name="Saint-Girons I."/>
            <person name="Charon N.W."/>
        </authorList>
    </citation>
    <scope>NUCLEOTIDE SEQUENCE [GENOMIC DNA]</scope>
    <source>
        <strain>212</strain>
    </source>
</reference>
<reference key="4">
    <citation type="journal article" date="1997" name="Nature">
        <title>Genomic sequence of a Lyme disease spirochaete, Borrelia burgdorferi.</title>
        <authorList>
            <person name="Fraser C.M."/>
            <person name="Casjens S."/>
            <person name="Huang W.M."/>
            <person name="Sutton G.G."/>
            <person name="Clayton R.A."/>
            <person name="Lathigra R."/>
            <person name="White O."/>
            <person name="Ketchum K.A."/>
            <person name="Dodson R.J."/>
            <person name="Hickey E.K."/>
            <person name="Gwinn M.L."/>
            <person name="Dougherty B.A."/>
            <person name="Tomb J.-F."/>
            <person name="Fleischmann R.D."/>
            <person name="Richardson D.L."/>
            <person name="Peterson J.D."/>
            <person name="Kerlavage A.R."/>
            <person name="Quackenbush J."/>
            <person name="Salzberg S.L."/>
            <person name="Hanson M."/>
            <person name="van Vugt R."/>
            <person name="Palmer N."/>
            <person name="Adams M.D."/>
            <person name="Gocayne J.D."/>
            <person name="Weidman J.F."/>
            <person name="Utterback T.R."/>
            <person name="Watthey L."/>
            <person name="McDonald L.A."/>
            <person name="Artiach P."/>
            <person name="Bowman C."/>
            <person name="Garland S.A."/>
            <person name="Fujii C."/>
            <person name="Cotton M.D."/>
            <person name="Horst K."/>
            <person name="Roberts K.M."/>
            <person name="Hatch B."/>
            <person name="Smith H.O."/>
            <person name="Venter J.C."/>
        </authorList>
    </citation>
    <scope>NUCLEOTIDE SEQUENCE [LARGE SCALE GENOMIC DNA]</scope>
    <source>
        <strain>ATCC 35210 / DSM 4680 / CIP 102532 / B31</strain>
    </source>
</reference>